<gene>
    <name evidence="6" type="primary">sox5</name>
</gene>
<evidence type="ECO:0000250" key="1">
    <source>
        <dbReference type="UniProtKB" id="P35710"/>
    </source>
</evidence>
<evidence type="ECO:0000255" key="2"/>
<evidence type="ECO:0000255" key="3">
    <source>
        <dbReference type="PROSITE-ProRule" id="PRU00267"/>
    </source>
</evidence>
<evidence type="ECO:0000256" key="4">
    <source>
        <dbReference type="SAM" id="MobiDB-lite"/>
    </source>
</evidence>
<evidence type="ECO:0000269" key="5">
    <source>
    </source>
</evidence>
<evidence type="ECO:0000303" key="6">
    <source>
    </source>
</evidence>
<evidence type="ECO:0000305" key="7"/>
<proteinExistence type="evidence at transcript level"/>
<protein>
    <recommendedName>
        <fullName>Transcription factor Sox-5</fullName>
        <shortName evidence="6">xSox-5</shortName>
    </recommendedName>
    <alternativeName>
        <fullName evidence="6">SRY (sex determining region Y)-box 5</fullName>
    </alternativeName>
</protein>
<accession>P40647</accession>
<accession>A5PKN9</accession>
<sequence>MLTEPELPPDINRMSSKRPASPYGEADGEVAMATSRQKMEDEGSDGLPAFHLPLHVGFPSKPHSEEFQAVSLLTQESCDRRSPSYQLNSMELDCNKMSAFALHNVATSPMKAEEVGRQSGDSLSNSMLGTPERRKGSLADVVDTLKQRKMEELIKSEPEETPTIEKLLSKDWKDKLLAMGSGNLADVKGTPESLAEKERQLMTMINQLTSLREQLLAAHDEQKKLAASQIEKQRQQMELAKQQQEQIARQQQQLLQQQHKINLLQQQIQVQGQLPPLMIPVFPPDQRTLAAAAAAQQGFLIPPGFSYKPGCSDPYPLQLIPTTMAAAAAATPGLAPLQLQQLYAAQLAAMQVSPGAKLPGVPQNNLSNSISPSSVHTDKSTSSPPPKSKDDVAQPLNLSAKPKGSDSRSSSSPTSPHIQRLSSGSTHKPISSTSASTPIRLNSIDILSSLTSPGYLNDHDAVTKAIHEARQMKEQLRREQQALDGKVVNSLGLNNCRTEKDKSSLDALTQQLTGKPNEDKFSHAMMDFNLSGDSDGSAGISESRIYREARGRGSNEPHIKRPMNAFMVWAKDERRKILQAFPDMHNSNISKILGSRWKSMTNLEKQPYYEEQARLSKQHLEKYPDYKYKPRPKRTCLVDGKKLRIGEYKAIMRSRRQGQQTQIPISTAGVVYPGAIAMAGMPSPHLPSEHSSVSSSPEPGMPVIQSTYGIKQEELHIKEEIRGDNINGEMYDEYDEEDDPDIDYGSDSENPSATQAN</sequence>
<organism>
    <name type="scientific">Xenopus laevis</name>
    <name type="common">African clawed frog</name>
    <dbReference type="NCBI Taxonomy" id="8355"/>
    <lineage>
        <taxon>Eukaryota</taxon>
        <taxon>Metazoa</taxon>
        <taxon>Chordata</taxon>
        <taxon>Craniata</taxon>
        <taxon>Vertebrata</taxon>
        <taxon>Euteleostomi</taxon>
        <taxon>Amphibia</taxon>
        <taxon>Batrachia</taxon>
        <taxon>Anura</taxon>
        <taxon>Pipoidea</taxon>
        <taxon>Pipidae</taxon>
        <taxon>Xenopodinae</taxon>
        <taxon>Xenopus</taxon>
        <taxon>Xenopus</taxon>
    </lineage>
</organism>
<comment type="function">
    <text evidence="1">Transcription factor involved in chondrocytes differentiation and cartilage formation. Specifically binds the 5'-AACAAT-3' DNA motif present in enhancers and super-enhancers and promotes expression of genes important for chondrogenesis. Required for overt chondrogenesis when condensed prechondrocytes differentiate into early stage chondrocytes: sox5 and sox6 cooperatively bind with sox9 on active enhancers and super-enhancers associated with cartilage-specific genes, and thereby potentiate sox9's ability to transactivate. Not involved in precartilaginous condensation, the first step in chondrogenesis, during which skeletal progenitors differentiate into prechondrocytes.</text>
</comment>
<comment type="subcellular location">
    <subcellularLocation>
        <location evidence="1">Nucleus</location>
    </subcellularLocation>
</comment>
<comment type="tissue specificity">
    <text evidence="5">Expressed in migrating myoblasts during ventral body wall formation.</text>
</comment>
<comment type="sequence caution" evidence="7">
    <conflict type="miscellaneous discrepancy">
        <sequence resource="EMBL-CDS" id="AAI42560"/>
    </conflict>
    <text>Deletion of C-terminal sequence resulting in a frameshift at position 667.</text>
</comment>
<reference key="1">
    <citation type="submission" date="2007-06" db="EMBL/GenBank/DDBJ databases">
        <authorList>
            <consortium name="NIH - Xenopus Gene Collection (XGC) project"/>
        </authorList>
    </citation>
    <scope>NUCLEOTIDE SEQUENCE [LARGE SCALE MRNA]</scope>
    <source>
        <tissue>Neurula</tissue>
    </source>
</reference>
<reference key="2">
    <citation type="journal article" date="1992" name="Nucleic Acids Res.">
        <title>A conserved family of genes related to the testis determining gene, SRY.</title>
        <authorList>
            <person name="Denny P."/>
            <person name="Swift S."/>
            <person name="Brand N."/>
            <person name="Dabhade N."/>
            <person name="Barton P."/>
            <person name="Ashworth A."/>
        </authorList>
    </citation>
    <scope>NUCLEOTIDE SEQUENCE [MRNA] OF 570-623</scope>
    <source>
        <tissue>Oocyte</tissue>
    </source>
</reference>
<reference key="3">
    <citation type="journal article" date="2001" name="Dev. Biol.">
        <title>Hypaxial muscle migration during primary myogenesis in Xenopus laevis.</title>
        <authorList>
            <person name="Martin B.L."/>
            <person name="Harland R.M."/>
        </authorList>
    </citation>
    <scope>TISSUE SPECIFICITY</scope>
</reference>
<keyword id="KW-0175">Coiled coil</keyword>
<keyword id="KW-0221">Differentiation</keyword>
<keyword id="KW-0238">DNA-binding</keyword>
<keyword id="KW-0539">Nucleus</keyword>
<keyword id="KW-1185">Reference proteome</keyword>
<keyword id="KW-0804">Transcription</keyword>
<keyword id="KW-0805">Transcription regulation</keyword>
<dbReference type="EMBL" id="BC142559">
    <property type="protein sequence ID" value="AAI42560.1"/>
    <property type="status" value="ALT_SEQ"/>
    <property type="molecule type" value="mRNA"/>
</dbReference>
<dbReference type="EMBL" id="DR718509">
    <property type="status" value="NOT_ANNOTATED_CDS"/>
    <property type="molecule type" value="mRNA"/>
</dbReference>
<dbReference type="EMBL" id="X65653">
    <property type="protein sequence ID" value="CAA46604.1"/>
    <property type="molecule type" value="mRNA"/>
</dbReference>
<dbReference type="PIR" id="S22949">
    <property type="entry name" value="S22949"/>
</dbReference>
<dbReference type="RefSeq" id="NP_001167508.1">
    <property type="nucleotide sequence ID" value="NM_001174037.1"/>
</dbReference>
<dbReference type="BMRB" id="P40647"/>
<dbReference type="SMR" id="P40647"/>
<dbReference type="GeneID" id="100381154"/>
<dbReference type="KEGG" id="xla:100381154"/>
<dbReference type="CTD" id="100381154"/>
<dbReference type="OrthoDB" id="6247875at2759"/>
<dbReference type="Proteomes" id="UP000186698">
    <property type="component" value="Chromosome 3S"/>
</dbReference>
<dbReference type="Bgee" id="100381154">
    <property type="expression patterns" value="Expressed in neurula embryo and 15 other cell types or tissues"/>
</dbReference>
<dbReference type="GO" id="GO:0005634">
    <property type="term" value="C:nucleus"/>
    <property type="evidence" value="ECO:0000318"/>
    <property type="project" value="GO_Central"/>
</dbReference>
<dbReference type="GO" id="GO:0000981">
    <property type="term" value="F:DNA-binding transcription factor activity, RNA polymerase II-specific"/>
    <property type="evidence" value="ECO:0000318"/>
    <property type="project" value="GO_Central"/>
</dbReference>
<dbReference type="GO" id="GO:0000978">
    <property type="term" value="F:RNA polymerase II cis-regulatory region sequence-specific DNA binding"/>
    <property type="evidence" value="ECO:0000318"/>
    <property type="project" value="GO_Central"/>
</dbReference>
<dbReference type="GO" id="GO:0001502">
    <property type="term" value="P:cartilage condensation"/>
    <property type="evidence" value="ECO:0000250"/>
    <property type="project" value="UniProtKB"/>
</dbReference>
<dbReference type="GO" id="GO:0051216">
    <property type="term" value="P:cartilage development"/>
    <property type="evidence" value="ECO:0000250"/>
    <property type="project" value="UniProtKB"/>
</dbReference>
<dbReference type="GO" id="GO:0045165">
    <property type="term" value="P:cell fate commitment"/>
    <property type="evidence" value="ECO:0000318"/>
    <property type="project" value="GO_Central"/>
</dbReference>
<dbReference type="GO" id="GO:0002062">
    <property type="term" value="P:chondrocyte differentiation"/>
    <property type="evidence" value="ECO:0000250"/>
    <property type="project" value="UniProtKB"/>
</dbReference>
<dbReference type="GO" id="GO:0090263">
    <property type="term" value="P:positive regulation of canonical Wnt signaling pathway"/>
    <property type="evidence" value="ECO:0000314"/>
    <property type="project" value="UniProtKB"/>
</dbReference>
<dbReference type="GO" id="GO:0032332">
    <property type="term" value="P:positive regulation of chondrocyte differentiation"/>
    <property type="evidence" value="ECO:0000318"/>
    <property type="project" value="GO_Central"/>
</dbReference>
<dbReference type="GO" id="GO:0006357">
    <property type="term" value="P:regulation of transcription by RNA polymerase II"/>
    <property type="evidence" value="ECO:0000318"/>
    <property type="project" value="GO_Central"/>
</dbReference>
<dbReference type="CDD" id="cd22030">
    <property type="entry name" value="HMG-box_SoxD"/>
    <property type="match status" value="1"/>
</dbReference>
<dbReference type="FunFam" id="1.10.30.10:FF:000003">
    <property type="entry name" value="Putative transcription factor SOX-6"/>
    <property type="match status" value="1"/>
</dbReference>
<dbReference type="Gene3D" id="1.10.30.10">
    <property type="entry name" value="High mobility group box domain"/>
    <property type="match status" value="1"/>
</dbReference>
<dbReference type="InterPro" id="IPR009071">
    <property type="entry name" value="HMG_box_dom"/>
</dbReference>
<dbReference type="InterPro" id="IPR036910">
    <property type="entry name" value="HMG_box_dom_sf"/>
</dbReference>
<dbReference type="InterPro" id="IPR051356">
    <property type="entry name" value="SOX/SOX-like_TF"/>
</dbReference>
<dbReference type="PANTHER" id="PTHR45789">
    <property type="entry name" value="FI18025P1"/>
    <property type="match status" value="1"/>
</dbReference>
<dbReference type="PANTHER" id="PTHR45789:SF3">
    <property type="entry name" value="TRANSCRIPTION FACTOR SOX-5"/>
    <property type="match status" value="1"/>
</dbReference>
<dbReference type="Pfam" id="PF00505">
    <property type="entry name" value="HMG_box"/>
    <property type="match status" value="1"/>
</dbReference>
<dbReference type="SMART" id="SM00398">
    <property type="entry name" value="HMG"/>
    <property type="match status" value="1"/>
</dbReference>
<dbReference type="SUPFAM" id="SSF47095">
    <property type="entry name" value="HMG-box"/>
    <property type="match status" value="1"/>
</dbReference>
<dbReference type="PROSITE" id="PS50118">
    <property type="entry name" value="HMG_BOX_2"/>
    <property type="match status" value="1"/>
</dbReference>
<feature type="chain" id="PRO_0000048728" description="Transcription factor Sox-5">
    <location>
        <begin position="1"/>
        <end position="757"/>
    </location>
</feature>
<feature type="DNA-binding region" description="HMG box" evidence="3">
    <location>
        <begin position="559"/>
        <end position="627"/>
    </location>
</feature>
<feature type="region of interest" description="Disordered" evidence="4">
    <location>
        <begin position="1"/>
        <end position="48"/>
    </location>
</feature>
<feature type="region of interest" description="Disordered" evidence="4">
    <location>
        <begin position="113"/>
        <end position="137"/>
    </location>
</feature>
<feature type="region of interest" description="Disordered" evidence="4">
    <location>
        <begin position="359"/>
        <end position="436"/>
    </location>
</feature>
<feature type="region of interest" description="Disordered" evidence="4">
    <location>
        <begin position="719"/>
        <end position="757"/>
    </location>
</feature>
<feature type="coiled-coil region" evidence="2">
    <location>
        <begin position="457"/>
        <end position="489"/>
    </location>
</feature>
<feature type="compositionally biased region" description="Polar residues" evidence="4">
    <location>
        <begin position="119"/>
        <end position="128"/>
    </location>
</feature>
<feature type="compositionally biased region" description="Polar residues" evidence="4">
    <location>
        <begin position="362"/>
        <end position="375"/>
    </location>
</feature>
<feature type="compositionally biased region" description="Low complexity" evidence="4">
    <location>
        <begin position="399"/>
        <end position="416"/>
    </location>
</feature>
<feature type="compositionally biased region" description="Polar residues" evidence="4">
    <location>
        <begin position="420"/>
        <end position="436"/>
    </location>
</feature>
<feature type="compositionally biased region" description="Acidic residues" evidence="4">
    <location>
        <begin position="730"/>
        <end position="746"/>
    </location>
</feature>
<name>SOX5_XENLA</name>